<protein>
    <recommendedName>
        <fullName>Nascent polypeptide-associated complex subunit alpha</fullName>
        <shortName>NAC-alpha</shortName>
    </recommendedName>
    <alternativeName>
        <fullName>Alpha-NAC</fullName>
    </alternativeName>
</protein>
<gene>
    <name type="primary">naca</name>
</gene>
<sequence>MPGEATETVPVTEQEMQQPQAETGSGTESDSDESVPDLEEGDSAQTQTQQAQLAAAAEIDEEPVSKAKQSRSEKKARKAMSKLGLRQVAGVTRVTIRKSKNILFVITKPDVYKSPASDTYIVFGEAKIEDLSQQAQLAAAEKFKVQGEAVSNIQENTQTPTVQEESEEEEVDETGVEVKDIELVMSQANVSRAKAVRALKNNNNDIVNAIMELTM</sequence>
<feature type="chain" id="PRO_0000135580" description="Nascent polypeptide-associated complex subunit alpha">
    <location>
        <begin position="1"/>
        <end position="215"/>
    </location>
</feature>
<feature type="domain" description="NAC-A/B" evidence="2">
    <location>
        <begin position="70"/>
        <end position="135"/>
    </location>
</feature>
<feature type="domain" description="UBA">
    <location>
        <begin position="176"/>
        <end position="213"/>
    </location>
</feature>
<feature type="region of interest" description="Disordered" evidence="3">
    <location>
        <begin position="1"/>
        <end position="82"/>
    </location>
</feature>
<feature type="compositionally biased region" description="Polar residues" evidence="3">
    <location>
        <begin position="9"/>
        <end position="28"/>
    </location>
</feature>
<feature type="compositionally biased region" description="Acidic residues" evidence="3">
    <location>
        <begin position="29"/>
        <end position="42"/>
    </location>
</feature>
<feature type="compositionally biased region" description="Low complexity" evidence="3">
    <location>
        <begin position="44"/>
        <end position="57"/>
    </location>
</feature>
<feature type="modified residue" description="Phosphoserine" evidence="4">
    <location>
        <position position="166"/>
    </location>
</feature>
<dbReference type="EMBL" id="AY099510">
    <property type="protein sequence ID" value="AAM21714.1"/>
    <property type="molecule type" value="mRNA"/>
</dbReference>
<dbReference type="EMBL" id="AY398384">
    <property type="protein sequence ID" value="AAQ97817.1"/>
    <property type="molecule type" value="mRNA"/>
</dbReference>
<dbReference type="EMBL" id="BC122432">
    <property type="protein sequence ID" value="AAI22433.1"/>
    <property type="molecule type" value="mRNA"/>
</dbReference>
<dbReference type="RefSeq" id="NP_001180281.1">
    <property type="nucleotide sequence ID" value="NM_001193352.1"/>
</dbReference>
<dbReference type="RefSeq" id="NP_775371.1">
    <property type="nucleotide sequence ID" value="NM_173264.2"/>
</dbReference>
<dbReference type="SMR" id="Q8JIU7"/>
<dbReference type="BioGRID" id="79752">
    <property type="interactions" value="3"/>
</dbReference>
<dbReference type="FunCoup" id="Q8JIU7">
    <property type="interactions" value="2287"/>
</dbReference>
<dbReference type="STRING" id="7955.ENSDARP00000025953"/>
<dbReference type="iPTMnet" id="Q8JIU7"/>
<dbReference type="Ensembl" id="ENSDART00000014723">
    <property type="protein sequence ID" value="ENSDARP00000025953"/>
    <property type="gene ID" value="ENSDARG00000005513"/>
</dbReference>
<dbReference type="GeneID" id="195823"/>
<dbReference type="KEGG" id="dre:195823"/>
<dbReference type="AGR" id="ZFIN:ZDB-GENE-020423-4"/>
<dbReference type="CTD" id="4666"/>
<dbReference type="ZFIN" id="ZDB-GENE-020423-4">
    <property type="gene designation" value="naca"/>
</dbReference>
<dbReference type="eggNOG" id="KOG2239">
    <property type="taxonomic scope" value="Eukaryota"/>
</dbReference>
<dbReference type="HOGENOM" id="CLU_057806_1_2_1"/>
<dbReference type="InParanoid" id="Q8JIU7"/>
<dbReference type="OrthoDB" id="3169036at2759"/>
<dbReference type="PhylomeDB" id="Q8JIU7"/>
<dbReference type="TreeFam" id="TF313348"/>
<dbReference type="PRO" id="PR:Q8JIU7"/>
<dbReference type="Proteomes" id="UP000000437">
    <property type="component" value="Chromosome 23"/>
</dbReference>
<dbReference type="Bgee" id="ENSDARG00000005513">
    <property type="expression patterns" value="Expressed in pharyngeal gill and 27 other cell types or tissues"/>
</dbReference>
<dbReference type="ExpressionAtlas" id="Q8JIU7">
    <property type="expression patterns" value="baseline and differential"/>
</dbReference>
<dbReference type="GO" id="GO:0005737">
    <property type="term" value="C:cytoplasm"/>
    <property type="evidence" value="ECO:0000314"/>
    <property type="project" value="ZFIN"/>
</dbReference>
<dbReference type="GO" id="GO:0005854">
    <property type="term" value="C:nascent polypeptide-associated complex"/>
    <property type="evidence" value="ECO:0007669"/>
    <property type="project" value="InterPro"/>
</dbReference>
<dbReference type="GO" id="GO:0005634">
    <property type="term" value="C:nucleus"/>
    <property type="evidence" value="ECO:0000314"/>
    <property type="project" value="ZFIN"/>
</dbReference>
<dbReference type="GO" id="GO:0051082">
    <property type="term" value="F:unfolded protein binding"/>
    <property type="evidence" value="ECO:0000318"/>
    <property type="project" value="GO_Central"/>
</dbReference>
<dbReference type="GO" id="GO:0060216">
    <property type="term" value="P:definitive hemopoiesis"/>
    <property type="evidence" value="ECO:0000315"/>
    <property type="project" value="ZFIN"/>
</dbReference>
<dbReference type="GO" id="GO:0030239">
    <property type="term" value="P:myofibril assembly"/>
    <property type="evidence" value="ECO:0000315"/>
    <property type="project" value="ZFIN"/>
</dbReference>
<dbReference type="GO" id="GO:0006612">
    <property type="term" value="P:protein targeting to membrane"/>
    <property type="evidence" value="ECO:0000318"/>
    <property type="project" value="GO_Central"/>
</dbReference>
<dbReference type="GO" id="GO:0015031">
    <property type="term" value="P:protein transport"/>
    <property type="evidence" value="ECO:0007669"/>
    <property type="project" value="UniProtKB-KW"/>
</dbReference>
<dbReference type="CDD" id="cd22054">
    <property type="entry name" value="NAC_NACA"/>
    <property type="match status" value="1"/>
</dbReference>
<dbReference type="CDD" id="cd14415">
    <property type="entry name" value="UBA_NACA_NACP1"/>
    <property type="match status" value="1"/>
</dbReference>
<dbReference type="FunFam" id="2.20.70.30:FF:000002">
    <property type="entry name" value="Nascent polypeptide-associated complex (NAC), alpha subunit"/>
    <property type="match status" value="1"/>
</dbReference>
<dbReference type="FunFam" id="1.10.8.10:FF:000006">
    <property type="entry name" value="Putative nascent polypeptide-associated complex subunit alpha"/>
    <property type="match status" value="1"/>
</dbReference>
<dbReference type="Gene3D" id="1.10.8.10">
    <property type="entry name" value="DNA helicase RuvA subunit, C-terminal domain"/>
    <property type="match status" value="1"/>
</dbReference>
<dbReference type="Gene3D" id="2.20.70.30">
    <property type="entry name" value="Nascent polypeptide-associated complex domain"/>
    <property type="match status" value="1"/>
</dbReference>
<dbReference type="InterPro" id="IPR016641">
    <property type="entry name" value="EGD2/NACA0like"/>
</dbReference>
<dbReference type="InterPro" id="IPR044034">
    <property type="entry name" value="NAC-like_UBA"/>
</dbReference>
<dbReference type="InterPro" id="IPR038187">
    <property type="entry name" value="NAC_A/B_dom_sf"/>
</dbReference>
<dbReference type="InterPro" id="IPR002715">
    <property type="entry name" value="Nas_poly-pep-assoc_cplx_dom"/>
</dbReference>
<dbReference type="PANTHER" id="PTHR21713">
    <property type="entry name" value="NASCENT POLYPEPTIDE ASSOCIATED COMPLEX ALPHA SUBUNIT-RELATED"/>
    <property type="match status" value="1"/>
</dbReference>
<dbReference type="Pfam" id="PF01849">
    <property type="entry name" value="NAC"/>
    <property type="match status" value="1"/>
</dbReference>
<dbReference type="Pfam" id="PF19026">
    <property type="entry name" value="UBA_HYPK"/>
    <property type="match status" value="1"/>
</dbReference>
<dbReference type="SMART" id="SM01407">
    <property type="entry name" value="NAC"/>
    <property type="match status" value="1"/>
</dbReference>
<dbReference type="PROSITE" id="PS51151">
    <property type="entry name" value="NAC_AB"/>
    <property type="match status" value="1"/>
</dbReference>
<organism>
    <name type="scientific">Danio rerio</name>
    <name type="common">Zebrafish</name>
    <name type="synonym">Brachydanio rerio</name>
    <dbReference type="NCBI Taxonomy" id="7955"/>
    <lineage>
        <taxon>Eukaryota</taxon>
        <taxon>Metazoa</taxon>
        <taxon>Chordata</taxon>
        <taxon>Craniata</taxon>
        <taxon>Vertebrata</taxon>
        <taxon>Euteleostomi</taxon>
        <taxon>Actinopterygii</taxon>
        <taxon>Neopterygii</taxon>
        <taxon>Teleostei</taxon>
        <taxon>Ostariophysi</taxon>
        <taxon>Cypriniformes</taxon>
        <taxon>Danionidae</taxon>
        <taxon>Danioninae</taxon>
        <taxon>Danio</taxon>
    </lineage>
</organism>
<comment type="function">
    <text evidence="1">May promote appropriate targeting of ribosome-nascent polypeptide complexes.</text>
</comment>
<comment type="similarity">
    <text evidence="5">Belongs to the NAC-alpha family.</text>
</comment>
<keyword id="KW-0597">Phosphoprotein</keyword>
<keyword id="KW-0653">Protein transport</keyword>
<keyword id="KW-1185">Reference proteome</keyword>
<keyword id="KW-0813">Transport</keyword>
<name>NACA_DANRE</name>
<reference key="1">
    <citation type="submission" date="2002-04" db="EMBL/GenBank/DDBJ databases">
        <authorList>
            <person name="Amsterdam A."/>
            <person name="Burgess S."/>
            <person name="Golling G."/>
            <person name="Chen W."/>
            <person name="Sun Z."/>
            <person name="Townsend K."/>
            <person name="Farrington S."/>
            <person name="Haldi M."/>
            <person name="Hopkins N."/>
        </authorList>
    </citation>
    <scope>NUCLEOTIDE SEQUENCE [LARGE SCALE MRNA]</scope>
</reference>
<reference key="2">
    <citation type="journal article" date="2004" name="Proc. Natl. Acad. Sci. U.S.A.">
        <title>Hematopoietic gene expression profile in zebrafish kidney marrow.</title>
        <authorList>
            <person name="Song H.-D."/>
            <person name="Sun X.-J."/>
            <person name="Deng M."/>
            <person name="Zhang G.-W."/>
            <person name="Zhou Y."/>
            <person name="Wu X.-Y."/>
            <person name="Sheng Y."/>
            <person name="Chen Y."/>
            <person name="Ruan Z."/>
            <person name="Jiang C.-L."/>
            <person name="Fan H.-Y."/>
            <person name="Zon L.I."/>
            <person name="Kanki J.P."/>
            <person name="Liu T.X."/>
            <person name="Look A.T."/>
            <person name="Chen Z."/>
        </authorList>
    </citation>
    <scope>NUCLEOTIDE SEQUENCE [LARGE SCALE MRNA]</scope>
    <source>
        <tissue>Kidney marrow</tissue>
    </source>
</reference>
<reference key="3">
    <citation type="submission" date="2006-08" db="EMBL/GenBank/DDBJ databases">
        <authorList>
            <consortium name="NIH - Zebrafish Gene Collection (ZGC) project"/>
        </authorList>
    </citation>
    <scope>NUCLEOTIDE SEQUENCE [LARGE SCALE MRNA]</scope>
    <source>
        <tissue>Ovary</tissue>
    </source>
</reference>
<reference key="4">
    <citation type="journal article" date="2008" name="J. Proteome Res.">
        <title>Online automated in vivo zebrafish phosphoproteomics: from large-scale analysis down to a single embryo.</title>
        <authorList>
            <person name="Lemeer S."/>
            <person name="Pinkse M.W.H."/>
            <person name="Mohammed S."/>
            <person name="van Breukelen B."/>
            <person name="den Hertog J."/>
            <person name="Slijper M."/>
            <person name="Heck A.J.R."/>
        </authorList>
    </citation>
    <scope>PHOSPHORYLATION [LARGE SCALE ANALYSIS] AT SER-166</scope>
    <scope>IDENTIFICATION BY MASS SPECTROMETRY</scope>
    <source>
        <tissue>Embryo</tissue>
    </source>
</reference>
<proteinExistence type="evidence at protein level"/>
<evidence type="ECO:0000250" key="1"/>
<evidence type="ECO:0000255" key="2">
    <source>
        <dbReference type="PROSITE-ProRule" id="PRU00507"/>
    </source>
</evidence>
<evidence type="ECO:0000256" key="3">
    <source>
        <dbReference type="SAM" id="MobiDB-lite"/>
    </source>
</evidence>
<evidence type="ECO:0000269" key="4">
    <source>
    </source>
</evidence>
<evidence type="ECO:0000305" key="5"/>
<accession>Q8JIU7</accession>
<accession>Q0P3U9</accession>